<name>DER_MYCTA</name>
<comment type="function">
    <text evidence="1">GTPase that plays an essential role in the late steps of ribosome biogenesis.</text>
</comment>
<comment type="subunit">
    <text evidence="1">Associates with the 50S ribosomal subunit.</text>
</comment>
<comment type="similarity">
    <text evidence="1">Belongs to the TRAFAC class TrmE-Era-EngA-EngB-Septin-like GTPase superfamily. EngA (Der) GTPase family.</text>
</comment>
<dbReference type="EMBL" id="CP000611">
    <property type="protein sequence ID" value="ABQ73472.1"/>
    <property type="molecule type" value="Genomic_DNA"/>
</dbReference>
<dbReference type="RefSeq" id="WP_003898984.1">
    <property type="nucleotide sequence ID" value="NZ_CP016972.1"/>
</dbReference>
<dbReference type="SMR" id="A5U372"/>
<dbReference type="GeneID" id="45425684"/>
<dbReference type="KEGG" id="mra:MRA_1723"/>
<dbReference type="eggNOG" id="COG1160">
    <property type="taxonomic scope" value="Bacteria"/>
</dbReference>
<dbReference type="HOGENOM" id="CLU_016077_6_2_11"/>
<dbReference type="Proteomes" id="UP000001988">
    <property type="component" value="Chromosome"/>
</dbReference>
<dbReference type="GO" id="GO:0016887">
    <property type="term" value="F:ATP hydrolysis activity"/>
    <property type="evidence" value="ECO:0007669"/>
    <property type="project" value="InterPro"/>
</dbReference>
<dbReference type="GO" id="GO:0005525">
    <property type="term" value="F:GTP binding"/>
    <property type="evidence" value="ECO:0007669"/>
    <property type="project" value="UniProtKB-UniRule"/>
</dbReference>
<dbReference type="GO" id="GO:0043022">
    <property type="term" value="F:ribosome binding"/>
    <property type="evidence" value="ECO:0007669"/>
    <property type="project" value="TreeGrafter"/>
</dbReference>
<dbReference type="GO" id="GO:0042254">
    <property type="term" value="P:ribosome biogenesis"/>
    <property type="evidence" value="ECO:0007669"/>
    <property type="project" value="UniProtKB-KW"/>
</dbReference>
<dbReference type="CDD" id="cd01894">
    <property type="entry name" value="EngA1"/>
    <property type="match status" value="1"/>
</dbReference>
<dbReference type="CDD" id="cd01895">
    <property type="entry name" value="EngA2"/>
    <property type="match status" value="1"/>
</dbReference>
<dbReference type="FunFam" id="3.30.300.20:FF:000004">
    <property type="entry name" value="GTPase Der"/>
    <property type="match status" value="1"/>
</dbReference>
<dbReference type="FunFam" id="3.40.50.300:FF:000040">
    <property type="entry name" value="GTPase Der"/>
    <property type="match status" value="1"/>
</dbReference>
<dbReference type="FunFam" id="3.40.50.300:FF:000057">
    <property type="entry name" value="GTPase Der"/>
    <property type="match status" value="1"/>
</dbReference>
<dbReference type="Gene3D" id="3.30.300.20">
    <property type="match status" value="1"/>
</dbReference>
<dbReference type="Gene3D" id="3.40.50.300">
    <property type="entry name" value="P-loop containing nucleotide triphosphate hydrolases"/>
    <property type="match status" value="2"/>
</dbReference>
<dbReference type="HAMAP" id="MF_00195">
    <property type="entry name" value="GTPase_Der"/>
    <property type="match status" value="1"/>
</dbReference>
<dbReference type="InterPro" id="IPR003593">
    <property type="entry name" value="AAA+_ATPase"/>
</dbReference>
<dbReference type="InterPro" id="IPR031166">
    <property type="entry name" value="G_ENGA"/>
</dbReference>
<dbReference type="InterPro" id="IPR006073">
    <property type="entry name" value="GTP-bd"/>
</dbReference>
<dbReference type="InterPro" id="IPR016484">
    <property type="entry name" value="GTPase_Der"/>
</dbReference>
<dbReference type="InterPro" id="IPR032859">
    <property type="entry name" value="KH_dom-like"/>
</dbReference>
<dbReference type="InterPro" id="IPR015946">
    <property type="entry name" value="KH_dom-like_a/b"/>
</dbReference>
<dbReference type="InterPro" id="IPR027417">
    <property type="entry name" value="P-loop_NTPase"/>
</dbReference>
<dbReference type="InterPro" id="IPR005225">
    <property type="entry name" value="Small_GTP-bd"/>
</dbReference>
<dbReference type="NCBIfam" id="TIGR03594">
    <property type="entry name" value="GTPase_EngA"/>
    <property type="match status" value="1"/>
</dbReference>
<dbReference type="NCBIfam" id="NF002828">
    <property type="entry name" value="PRK03003.1"/>
    <property type="match status" value="1"/>
</dbReference>
<dbReference type="NCBIfam" id="TIGR00231">
    <property type="entry name" value="small_GTP"/>
    <property type="match status" value="2"/>
</dbReference>
<dbReference type="PANTHER" id="PTHR43834">
    <property type="entry name" value="GTPASE DER"/>
    <property type="match status" value="1"/>
</dbReference>
<dbReference type="PANTHER" id="PTHR43834:SF6">
    <property type="entry name" value="GTPASE DER"/>
    <property type="match status" value="1"/>
</dbReference>
<dbReference type="Pfam" id="PF14714">
    <property type="entry name" value="KH_dom-like"/>
    <property type="match status" value="1"/>
</dbReference>
<dbReference type="Pfam" id="PF01926">
    <property type="entry name" value="MMR_HSR1"/>
    <property type="match status" value="2"/>
</dbReference>
<dbReference type="PIRSF" id="PIRSF006485">
    <property type="entry name" value="GTP-binding_EngA"/>
    <property type="match status" value="1"/>
</dbReference>
<dbReference type="PRINTS" id="PR00326">
    <property type="entry name" value="GTP1OBG"/>
</dbReference>
<dbReference type="SMART" id="SM00382">
    <property type="entry name" value="AAA"/>
    <property type="match status" value="2"/>
</dbReference>
<dbReference type="SUPFAM" id="SSF52540">
    <property type="entry name" value="P-loop containing nucleoside triphosphate hydrolases"/>
    <property type="match status" value="2"/>
</dbReference>
<dbReference type="PROSITE" id="PS51712">
    <property type="entry name" value="G_ENGA"/>
    <property type="match status" value="2"/>
</dbReference>
<reference key="1">
    <citation type="journal article" date="2008" name="PLoS ONE">
        <title>Genetic basis of virulence attenuation revealed by comparative genomic analysis of Mycobacterium tuberculosis strain H37Ra versus H37Rv.</title>
        <authorList>
            <person name="Zheng H."/>
            <person name="Lu L."/>
            <person name="Wang B."/>
            <person name="Pu S."/>
            <person name="Zhang X."/>
            <person name="Zhu G."/>
            <person name="Shi W."/>
            <person name="Zhang L."/>
            <person name="Wang H."/>
            <person name="Wang S."/>
            <person name="Zhao G."/>
            <person name="Zhang Y."/>
        </authorList>
    </citation>
    <scope>NUCLEOTIDE SEQUENCE [LARGE SCALE GENOMIC DNA]</scope>
    <source>
        <strain>ATCC 25177 / H37Ra</strain>
    </source>
</reference>
<feature type="chain" id="PRO_1000011672" description="GTPase Der">
    <location>
        <begin position="1"/>
        <end position="463"/>
    </location>
</feature>
<feature type="domain" description="EngA-type G 1">
    <location>
        <begin position="27"/>
        <end position="190"/>
    </location>
</feature>
<feature type="domain" description="EngA-type G 2">
    <location>
        <begin position="200"/>
        <end position="373"/>
    </location>
</feature>
<feature type="domain" description="KH-like" evidence="1">
    <location>
        <begin position="374"/>
        <end position="456"/>
    </location>
</feature>
<feature type="binding site" evidence="1">
    <location>
        <begin position="33"/>
        <end position="40"/>
    </location>
    <ligand>
        <name>GTP</name>
        <dbReference type="ChEBI" id="CHEBI:37565"/>
        <label>1</label>
    </ligand>
</feature>
<feature type="binding site" evidence="1">
    <location>
        <begin position="80"/>
        <end position="84"/>
    </location>
    <ligand>
        <name>GTP</name>
        <dbReference type="ChEBI" id="CHEBI:37565"/>
        <label>1</label>
    </ligand>
</feature>
<feature type="binding site" evidence="1">
    <location>
        <begin position="142"/>
        <end position="145"/>
    </location>
    <ligand>
        <name>GTP</name>
        <dbReference type="ChEBI" id="CHEBI:37565"/>
        <label>1</label>
    </ligand>
</feature>
<feature type="binding site" evidence="1">
    <location>
        <begin position="206"/>
        <end position="213"/>
    </location>
    <ligand>
        <name>GTP</name>
        <dbReference type="ChEBI" id="CHEBI:37565"/>
        <label>2</label>
    </ligand>
</feature>
<feature type="binding site" evidence="1">
    <location>
        <begin position="253"/>
        <end position="257"/>
    </location>
    <ligand>
        <name>GTP</name>
        <dbReference type="ChEBI" id="CHEBI:37565"/>
        <label>2</label>
    </ligand>
</feature>
<feature type="binding site" evidence="1">
    <location>
        <begin position="318"/>
        <end position="321"/>
    </location>
    <ligand>
        <name>GTP</name>
        <dbReference type="ChEBI" id="CHEBI:37565"/>
        <label>2</label>
    </ligand>
</feature>
<gene>
    <name evidence="1" type="primary">der</name>
    <name type="synonym">engA</name>
    <name type="ordered locus">MRA_1723</name>
</gene>
<sequence length="463" mass="49958">MTQDGTWVDESDWQLDDSEIAESGAAPVVAVVGRPNVGKSTLVNRILGRREAVVQDIPGVTRDRVCYDALWTGRRFVVQDTGGWEPNAKGLQRLVAEQASVAMRTADAVILVVDAGVGATAADEAAARILLRSGKPVFLAANKVDSEKGESDAAALWSLGLGEPHAISAMHGRGVADLLDGVLAALPEVGESASASGGPRRVALVGKPNVGKSSLLNKLAGDQRSVVHEAAGTTVDPVDSLIELGGDVWRFVDTAGLRRKVGQASGHEFYASVRTHAAIDSAEVAIVLIDASQPLTEQDLRVISMVIEAGRALVLAYNKWDLVDEDRRELLQREIDRELVQVRWAQRVNISAKTGRAVHKLVPAMEDALASWDTRIATGPLNTWLTEVTAATPPPVRGGKQPRILFATQATARPPTFVLFTTGFLEAGYRRFLERRLRETFGFDGSPIRVNVRVREKRAGKRR</sequence>
<protein>
    <recommendedName>
        <fullName evidence="1">GTPase Der</fullName>
    </recommendedName>
    <alternativeName>
        <fullName evidence="1">GTP-binding protein EngA</fullName>
    </alternativeName>
</protein>
<evidence type="ECO:0000255" key="1">
    <source>
        <dbReference type="HAMAP-Rule" id="MF_00195"/>
    </source>
</evidence>
<proteinExistence type="inferred from homology"/>
<accession>A5U372</accession>
<organism>
    <name type="scientific">Mycobacterium tuberculosis (strain ATCC 25177 / H37Ra)</name>
    <dbReference type="NCBI Taxonomy" id="419947"/>
    <lineage>
        <taxon>Bacteria</taxon>
        <taxon>Bacillati</taxon>
        <taxon>Actinomycetota</taxon>
        <taxon>Actinomycetes</taxon>
        <taxon>Mycobacteriales</taxon>
        <taxon>Mycobacteriaceae</taxon>
        <taxon>Mycobacterium</taxon>
        <taxon>Mycobacterium tuberculosis complex</taxon>
    </lineage>
</organism>
<keyword id="KW-0342">GTP-binding</keyword>
<keyword id="KW-0547">Nucleotide-binding</keyword>
<keyword id="KW-1185">Reference proteome</keyword>
<keyword id="KW-0677">Repeat</keyword>
<keyword id="KW-0690">Ribosome biogenesis</keyword>